<accession>A5DK49</accession>
<feature type="chain" id="PRO_0000399699" description="Altered inheritance of mitochondria protein 32">
    <location>
        <begin position="1"/>
        <end position="282"/>
    </location>
</feature>
<sequence>MLCIRRSLSRFVDSCPRPRYDTGCTYCEIPKFPADKQIDFDRNLNGTQPETWKHLLILSHGYPSMEAMPPRIELTPATLSSEINAVKRQMLSPMHPVAVSNVVVNNHTLPNKPLGPQEHFVYLYPDRKSIRFEAKDLATFIARYLVPEEKPEVYNPFKQEVEKTQRIQQSSIEFEEQDITDELVLICGHGSRDVRCGVMGPLLQREFDQVLTQENMSSHVKTGQITHVGGHAYAGNVVYFPRKGESVWYGRVFPEDVQGIVDTTIKQGVIIRDKYRGYVNGA</sequence>
<reference key="1">
    <citation type="journal article" date="2009" name="Nature">
        <title>Evolution of pathogenicity and sexual reproduction in eight Candida genomes.</title>
        <authorList>
            <person name="Butler G."/>
            <person name="Rasmussen M.D."/>
            <person name="Lin M.F."/>
            <person name="Santos M.A.S."/>
            <person name="Sakthikumar S."/>
            <person name="Munro C.A."/>
            <person name="Rheinbay E."/>
            <person name="Grabherr M."/>
            <person name="Forche A."/>
            <person name="Reedy J.L."/>
            <person name="Agrafioti I."/>
            <person name="Arnaud M.B."/>
            <person name="Bates S."/>
            <person name="Brown A.J.P."/>
            <person name="Brunke S."/>
            <person name="Costanzo M.C."/>
            <person name="Fitzpatrick D.A."/>
            <person name="de Groot P.W.J."/>
            <person name="Harris D."/>
            <person name="Hoyer L.L."/>
            <person name="Hube B."/>
            <person name="Klis F.M."/>
            <person name="Kodira C."/>
            <person name="Lennard N."/>
            <person name="Logue M.E."/>
            <person name="Martin R."/>
            <person name="Neiman A.M."/>
            <person name="Nikolaou E."/>
            <person name="Quail M.A."/>
            <person name="Quinn J."/>
            <person name="Santos M.C."/>
            <person name="Schmitzberger F.F."/>
            <person name="Sherlock G."/>
            <person name="Shah P."/>
            <person name="Silverstein K.A.T."/>
            <person name="Skrzypek M.S."/>
            <person name="Soll D."/>
            <person name="Staggs R."/>
            <person name="Stansfield I."/>
            <person name="Stumpf M.P.H."/>
            <person name="Sudbery P.E."/>
            <person name="Srikantha T."/>
            <person name="Zeng Q."/>
            <person name="Berman J."/>
            <person name="Berriman M."/>
            <person name="Heitman J."/>
            <person name="Gow N.A.R."/>
            <person name="Lorenz M.C."/>
            <person name="Birren B.W."/>
            <person name="Kellis M."/>
            <person name="Cuomo C.A."/>
        </authorList>
    </citation>
    <scope>NUCLEOTIDE SEQUENCE [LARGE SCALE GENOMIC DNA]</scope>
    <source>
        <strain>ATCC 6260 / CBS 566 / DSM 6381 / JCM 1539 / NBRC 10279 / NRRL Y-324</strain>
    </source>
</reference>
<comment type="similarity">
    <text evidence="1">Belongs to the AIM32 family.</text>
</comment>
<organism>
    <name type="scientific">Meyerozyma guilliermondii (strain ATCC 6260 / CBS 566 / DSM 6381 / JCM 1539 / NBRC 10279 / NRRL Y-324)</name>
    <name type="common">Yeast</name>
    <name type="synonym">Candida guilliermondii</name>
    <dbReference type="NCBI Taxonomy" id="294746"/>
    <lineage>
        <taxon>Eukaryota</taxon>
        <taxon>Fungi</taxon>
        <taxon>Dikarya</taxon>
        <taxon>Ascomycota</taxon>
        <taxon>Saccharomycotina</taxon>
        <taxon>Pichiomycetes</taxon>
        <taxon>Debaryomycetaceae</taxon>
        <taxon>Meyerozyma</taxon>
    </lineage>
</organism>
<protein>
    <recommendedName>
        <fullName>Altered inheritance of mitochondria protein 32</fullName>
    </recommendedName>
</protein>
<keyword id="KW-1185">Reference proteome</keyword>
<dbReference type="EMBL" id="CH408158">
    <property type="protein sequence ID" value="EDK39552.2"/>
    <property type="molecule type" value="Genomic_DNA"/>
</dbReference>
<dbReference type="RefSeq" id="XP_001484269.1">
    <property type="nucleotide sequence ID" value="XM_001484219.1"/>
</dbReference>
<dbReference type="SMR" id="A5DK49"/>
<dbReference type="FunCoup" id="A5DK49">
    <property type="interactions" value="17"/>
</dbReference>
<dbReference type="STRING" id="294746.A5DK49"/>
<dbReference type="GeneID" id="5125874"/>
<dbReference type="KEGG" id="pgu:PGUG_03650"/>
<dbReference type="VEuPathDB" id="FungiDB:PGUG_03650"/>
<dbReference type="eggNOG" id="ENOG502QS3W">
    <property type="taxonomic scope" value="Eukaryota"/>
</dbReference>
<dbReference type="HOGENOM" id="CLU_044499_1_0_1"/>
<dbReference type="InParanoid" id="A5DK49"/>
<dbReference type="OMA" id="IWYGRVF"/>
<dbReference type="OrthoDB" id="10253744at2759"/>
<dbReference type="Proteomes" id="UP000001997">
    <property type="component" value="Unassembled WGS sequence"/>
</dbReference>
<dbReference type="CDD" id="cd03062">
    <property type="entry name" value="TRX_Fd_Sucrase"/>
    <property type="match status" value="1"/>
</dbReference>
<dbReference type="Gene3D" id="3.40.30.10">
    <property type="entry name" value="Glutaredoxin"/>
    <property type="match status" value="1"/>
</dbReference>
<dbReference type="InterPro" id="IPR009737">
    <property type="entry name" value="Aim32/Apd1-like"/>
</dbReference>
<dbReference type="InterPro" id="IPR036249">
    <property type="entry name" value="Thioredoxin-like_sf"/>
</dbReference>
<dbReference type="PANTHER" id="PTHR31902">
    <property type="entry name" value="ACTIN PATCHES DISTAL PROTEIN 1"/>
    <property type="match status" value="1"/>
</dbReference>
<dbReference type="PANTHER" id="PTHR31902:SF7">
    <property type="entry name" value="ALTERED INHERITANCE OF MITOCHONDRIA PROTEIN 32"/>
    <property type="match status" value="1"/>
</dbReference>
<dbReference type="Pfam" id="PF06999">
    <property type="entry name" value="Suc_Fer-like"/>
    <property type="match status" value="1"/>
</dbReference>
<dbReference type="SUPFAM" id="SSF52833">
    <property type="entry name" value="Thioredoxin-like"/>
    <property type="match status" value="1"/>
</dbReference>
<evidence type="ECO:0000305" key="1"/>
<proteinExistence type="inferred from homology"/>
<name>AIM32_PICGU</name>
<gene>
    <name type="primary">AIM32</name>
    <name type="ORF">PGUG_03650</name>
</gene>